<reference key="1">
    <citation type="journal article" date="2024" name="J. Biol. Chem.">
        <title>Peptide toxins that target vertebrate voltage-gated sodium channels underly the painful stings of harvester ants.</title>
        <authorList>
            <person name="Robinson S.D."/>
            <person name="Deuis J.R."/>
            <person name="Niu P."/>
            <person name="Touchard A."/>
            <person name="Mueller A."/>
            <person name="Schendel V."/>
            <person name="Brinkwirth N."/>
            <person name="King G.F."/>
            <person name="Vetter I."/>
            <person name="Schmidt J.O."/>
        </authorList>
    </citation>
    <scope>NUCLEOTIDE SEQUENCE [MRNA]</scope>
    <scope>PROBABLE AMIDATION AT ASN-84</scope>
    <source>
        <tissue>Venom gland</tissue>
    </source>
</reference>
<feature type="signal peptide" evidence="4">
    <location>
        <begin position="1"/>
        <end position="23"/>
    </location>
</feature>
<feature type="propeptide" id="PRO_0000461249" evidence="7">
    <location>
        <begin position="24"/>
        <end position="57"/>
    </location>
</feature>
<feature type="peptide" id="PRO_0000461250" description="Myrmicitoxin(1)-Pr2d" evidence="7">
    <location>
        <begin position="58"/>
        <end position="84"/>
    </location>
</feature>
<feature type="modified residue" description="Asparagine amide" evidence="7">
    <location>
        <position position="84"/>
    </location>
</feature>
<comment type="function">
    <text evidence="1 2 3">Vertebrate-selective toxin that causes pain by targeting voltage-gated sodium channels.</text>
</comment>
<comment type="subcellular location">
    <subcellularLocation>
        <location evidence="7">Secreted</location>
    </subcellularLocation>
</comment>
<comment type="tissue specificity">
    <text evidence="7">Expressed by the venom gland.</text>
</comment>
<comment type="similarity">
    <text evidence="6">Belongs to the formicidae venom clade 1 family.</text>
</comment>
<name>TX2D_POGRU</name>
<evidence type="ECO:0000250" key="1">
    <source>
        <dbReference type="UniProtKB" id="A0A8U0LTF0"/>
    </source>
</evidence>
<evidence type="ECO:0000250" key="2">
    <source>
        <dbReference type="UniProtKB" id="P0DRD0"/>
    </source>
</evidence>
<evidence type="ECO:0000250" key="3">
    <source>
        <dbReference type="UniProtKB" id="P0DX61"/>
    </source>
</evidence>
<evidence type="ECO:0000255" key="4"/>
<evidence type="ECO:0000303" key="5">
    <source>
    </source>
</evidence>
<evidence type="ECO:0000305" key="6"/>
<evidence type="ECO:0000305" key="7">
    <source>
    </source>
</evidence>
<sequence>MEIPKLLYITVIAIGLSGSLTCATPLANPWADPEAEANPEAKATAEAIAEALAEPEPALPALPLLAFLFSLPAVQHWVEKNWING</sequence>
<organism>
    <name type="scientific">Pogonomyrmex rugosus</name>
    <name type="common">Desert harvester ant</name>
    <dbReference type="NCBI Taxonomy" id="144042"/>
    <lineage>
        <taxon>Eukaryota</taxon>
        <taxon>Metazoa</taxon>
        <taxon>Ecdysozoa</taxon>
        <taxon>Arthropoda</taxon>
        <taxon>Hexapoda</taxon>
        <taxon>Insecta</taxon>
        <taxon>Pterygota</taxon>
        <taxon>Neoptera</taxon>
        <taxon>Endopterygota</taxon>
        <taxon>Hymenoptera</taxon>
        <taxon>Apocrita</taxon>
        <taxon>Aculeata</taxon>
        <taxon>Formicoidea</taxon>
        <taxon>Formicidae</taxon>
        <taxon>Myrmicinae</taxon>
        <taxon>Pogonomyrmex</taxon>
    </lineage>
</organism>
<keyword id="KW-0027">Amidation</keyword>
<keyword id="KW-0872">Ion channel impairing toxin</keyword>
<keyword id="KW-0528">Neurotoxin</keyword>
<keyword id="KW-0964">Secreted</keyword>
<keyword id="KW-0732">Signal</keyword>
<keyword id="KW-0800">Toxin</keyword>
<keyword id="KW-0738">Voltage-gated sodium channel impairing toxin</keyword>
<dbReference type="EMBL" id="OR128477">
    <property type="protein sequence ID" value="WMI02515.1"/>
    <property type="molecule type" value="mRNA"/>
</dbReference>
<dbReference type="SMR" id="P0DXT5"/>
<dbReference type="GO" id="GO:0005576">
    <property type="term" value="C:extracellular region"/>
    <property type="evidence" value="ECO:0007669"/>
    <property type="project" value="UniProtKB-SubCell"/>
</dbReference>
<dbReference type="GO" id="GO:0017080">
    <property type="term" value="F:sodium channel regulator activity"/>
    <property type="evidence" value="ECO:0007669"/>
    <property type="project" value="UniProtKB-KW"/>
</dbReference>
<dbReference type="GO" id="GO:0090729">
    <property type="term" value="F:toxin activity"/>
    <property type="evidence" value="ECO:0007669"/>
    <property type="project" value="UniProtKB-KW"/>
</dbReference>
<protein>
    <recommendedName>
        <fullName evidence="5">Myrmicitoxin(1)-Pr2d</fullName>
        <shortName evidence="5">MYRTX(1)-Pr2d</shortName>
    </recommendedName>
</protein>
<proteinExistence type="evidence at protein level"/>
<accession>P0DXT5</accession>